<keyword id="KW-0030">Aminoacyl-tRNA synthetase</keyword>
<keyword id="KW-0067">ATP-binding</keyword>
<keyword id="KW-0963">Cytoplasm</keyword>
<keyword id="KW-0436">Ligase</keyword>
<keyword id="KW-0479">Metal-binding</keyword>
<keyword id="KW-0547">Nucleotide-binding</keyword>
<keyword id="KW-0648">Protein biosynthesis</keyword>
<keyword id="KW-1185">Reference proteome</keyword>
<keyword id="KW-0862">Zinc</keyword>
<proteinExistence type="inferred from homology"/>
<accession>A7NND5</accession>
<evidence type="ECO:0000255" key="1">
    <source>
        <dbReference type="HAMAP-Rule" id="MF_00098"/>
    </source>
</evidence>
<gene>
    <name evidence="1" type="primary">metG</name>
    <name type="ordered locus">Rcas_3011</name>
</gene>
<dbReference type="EC" id="6.1.1.10" evidence="1"/>
<dbReference type="EMBL" id="CP000804">
    <property type="protein sequence ID" value="ABU59068.1"/>
    <property type="molecule type" value="Genomic_DNA"/>
</dbReference>
<dbReference type="RefSeq" id="WP_012121492.1">
    <property type="nucleotide sequence ID" value="NC_009767.1"/>
</dbReference>
<dbReference type="SMR" id="A7NND5"/>
<dbReference type="STRING" id="383372.Rcas_3011"/>
<dbReference type="KEGG" id="rca:Rcas_3011"/>
<dbReference type="eggNOG" id="COG0143">
    <property type="taxonomic scope" value="Bacteria"/>
</dbReference>
<dbReference type="HOGENOM" id="CLU_009710_1_2_0"/>
<dbReference type="OrthoDB" id="9810191at2"/>
<dbReference type="Proteomes" id="UP000000263">
    <property type="component" value="Chromosome"/>
</dbReference>
<dbReference type="GO" id="GO:0005829">
    <property type="term" value="C:cytosol"/>
    <property type="evidence" value="ECO:0007669"/>
    <property type="project" value="TreeGrafter"/>
</dbReference>
<dbReference type="GO" id="GO:0005524">
    <property type="term" value="F:ATP binding"/>
    <property type="evidence" value="ECO:0007669"/>
    <property type="project" value="UniProtKB-UniRule"/>
</dbReference>
<dbReference type="GO" id="GO:0046872">
    <property type="term" value="F:metal ion binding"/>
    <property type="evidence" value="ECO:0007669"/>
    <property type="project" value="UniProtKB-KW"/>
</dbReference>
<dbReference type="GO" id="GO:0004825">
    <property type="term" value="F:methionine-tRNA ligase activity"/>
    <property type="evidence" value="ECO:0007669"/>
    <property type="project" value="UniProtKB-UniRule"/>
</dbReference>
<dbReference type="GO" id="GO:0006431">
    <property type="term" value="P:methionyl-tRNA aminoacylation"/>
    <property type="evidence" value="ECO:0007669"/>
    <property type="project" value="UniProtKB-UniRule"/>
</dbReference>
<dbReference type="CDD" id="cd07957">
    <property type="entry name" value="Anticodon_Ia_Met"/>
    <property type="match status" value="1"/>
</dbReference>
<dbReference type="CDD" id="cd00814">
    <property type="entry name" value="MetRS_core"/>
    <property type="match status" value="1"/>
</dbReference>
<dbReference type="FunFam" id="2.20.28.20:FF:000001">
    <property type="entry name" value="Methionine--tRNA ligase"/>
    <property type="match status" value="1"/>
</dbReference>
<dbReference type="Gene3D" id="3.40.50.620">
    <property type="entry name" value="HUPs"/>
    <property type="match status" value="1"/>
</dbReference>
<dbReference type="Gene3D" id="1.10.730.10">
    <property type="entry name" value="Isoleucyl-tRNA Synthetase, Domain 1"/>
    <property type="match status" value="1"/>
</dbReference>
<dbReference type="Gene3D" id="2.20.28.20">
    <property type="entry name" value="Methionyl-tRNA synthetase, Zn-domain"/>
    <property type="match status" value="1"/>
</dbReference>
<dbReference type="HAMAP" id="MF_00098">
    <property type="entry name" value="Met_tRNA_synth_type1"/>
    <property type="match status" value="1"/>
</dbReference>
<dbReference type="InterPro" id="IPR001412">
    <property type="entry name" value="aa-tRNA-synth_I_CS"/>
</dbReference>
<dbReference type="InterPro" id="IPR041872">
    <property type="entry name" value="Anticodon_Met"/>
</dbReference>
<dbReference type="InterPro" id="IPR023458">
    <property type="entry name" value="Met-tRNA_ligase_1"/>
</dbReference>
<dbReference type="InterPro" id="IPR014758">
    <property type="entry name" value="Met-tRNA_synth"/>
</dbReference>
<dbReference type="InterPro" id="IPR015413">
    <property type="entry name" value="Methionyl/Leucyl_tRNA_Synth"/>
</dbReference>
<dbReference type="InterPro" id="IPR033911">
    <property type="entry name" value="MetRS_core"/>
</dbReference>
<dbReference type="InterPro" id="IPR029038">
    <property type="entry name" value="MetRS_Zn"/>
</dbReference>
<dbReference type="InterPro" id="IPR014729">
    <property type="entry name" value="Rossmann-like_a/b/a_fold"/>
</dbReference>
<dbReference type="InterPro" id="IPR009080">
    <property type="entry name" value="tRNAsynth_Ia_anticodon-bd"/>
</dbReference>
<dbReference type="NCBIfam" id="TIGR00398">
    <property type="entry name" value="metG"/>
    <property type="match status" value="1"/>
</dbReference>
<dbReference type="NCBIfam" id="NF001100">
    <property type="entry name" value="PRK00133.1"/>
    <property type="match status" value="1"/>
</dbReference>
<dbReference type="PANTHER" id="PTHR45765">
    <property type="entry name" value="METHIONINE--TRNA LIGASE"/>
    <property type="match status" value="1"/>
</dbReference>
<dbReference type="PANTHER" id="PTHR45765:SF1">
    <property type="entry name" value="METHIONINE--TRNA LIGASE, CYTOPLASMIC"/>
    <property type="match status" value="1"/>
</dbReference>
<dbReference type="Pfam" id="PF19303">
    <property type="entry name" value="Anticodon_3"/>
    <property type="match status" value="1"/>
</dbReference>
<dbReference type="Pfam" id="PF09334">
    <property type="entry name" value="tRNA-synt_1g"/>
    <property type="match status" value="1"/>
</dbReference>
<dbReference type="PRINTS" id="PR01041">
    <property type="entry name" value="TRNASYNTHMET"/>
</dbReference>
<dbReference type="SUPFAM" id="SSF47323">
    <property type="entry name" value="Anticodon-binding domain of a subclass of class I aminoacyl-tRNA synthetases"/>
    <property type="match status" value="1"/>
</dbReference>
<dbReference type="SUPFAM" id="SSF57770">
    <property type="entry name" value="Methionyl-tRNA synthetase (MetRS), Zn-domain"/>
    <property type="match status" value="1"/>
</dbReference>
<dbReference type="SUPFAM" id="SSF52374">
    <property type="entry name" value="Nucleotidylyl transferase"/>
    <property type="match status" value="1"/>
</dbReference>
<dbReference type="PROSITE" id="PS00178">
    <property type="entry name" value="AA_TRNA_LIGASE_I"/>
    <property type="match status" value="1"/>
</dbReference>
<sequence>MPDTILVAVAWPYANGPFHVGHIAGAYLPADVFARYHRLRGHRTLMVSGSDCHGTPITIAAEREGITPQDVIRRYHPTFLKTFQALGISFDLFTQTYTDNHYRVTTDMFLRLLENGYLYKETMVGSYSETLGRFLPDRFVEGTCPNCGYPRARGDQCDSCGHLHDPQDLIAPRSVLDGAPVTFRETEHFFLDLAKLEPQLRAWIESVDRSYWRANTLLFTQNWLREGLRGRAITRDLEWGVPVPVDDPAFKDKRIYVWFDAVIGYYSASVEWAERTGAPDAWKDWWVCLPDGSAPARSYYFIGKDNIPFHTIIWPAMLIGYGNLALPYDVPANEFLNLEGDKMSTSRNWALWAPEIEDRYQPDAIRYYLIANGPETRDSNWSWADFVQRVNSELVATWGNLANRVLSITHRNFGAVPQPGELTDADRQLIAATQQTFESVTALLDGVKLRAALSEAMALAQTANQYLSEQEPWKLVRHDQERAATVLFVALRTVDTLKVLFCPFLPFSSQRLHELLGYTGTIAPQPHVEETTAPDGLPRLVLTGDYRASAGAWRISVLPPGQPIQPPTPLFQKLDEAIIAEELARLRAKVRL</sequence>
<organism>
    <name type="scientific">Roseiflexus castenholzii (strain DSM 13941 / HLO8)</name>
    <dbReference type="NCBI Taxonomy" id="383372"/>
    <lineage>
        <taxon>Bacteria</taxon>
        <taxon>Bacillati</taxon>
        <taxon>Chloroflexota</taxon>
        <taxon>Chloroflexia</taxon>
        <taxon>Chloroflexales</taxon>
        <taxon>Roseiflexineae</taxon>
        <taxon>Roseiflexaceae</taxon>
        <taxon>Roseiflexus</taxon>
    </lineage>
</organism>
<comment type="function">
    <text evidence="1">Is required not only for elongation of protein synthesis but also for the initiation of all mRNA translation through initiator tRNA(fMet) aminoacylation.</text>
</comment>
<comment type="catalytic activity">
    <reaction evidence="1">
        <text>tRNA(Met) + L-methionine + ATP = L-methionyl-tRNA(Met) + AMP + diphosphate</text>
        <dbReference type="Rhea" id="RHEA:13481"/>
        <dbReference type="Rhea" id="RHEA-COMP:9667"/>
        <dbReference type="Rhea" id="RHEA-COMP:9698"/>
        <dbReference type="ChEBI" id="CHEBI:30616"/>
        <dbReference type="ChEBI" id="CHEBI:33019"/>
        <dbReference type="ChEBI" id="CHEBI:57844"/>
        <dbReference type="ChEBI" id="CHEBI:78442"/>
        <dbReference type="ChEBI" id="CHEBI:78530"/>
        <dbReference type="ChEBI" id="CHEBI:456215"/>
        <dbReference type="EC" id="6.1.1.10"/>
    </reaction>
</comment>
<comment type="cofactor">
    <cofactor evidence="1">
        <name>Zn(2+)</name>
        <dbReference type="ChEBI" id="CHEBI:29105"/>
    </cofactor>
    <text evidence="1">Binds 1 zinc ion per subunit.</text>
</comment>
<comment type="subunit">
    <text evidence="1">Monomer.</text>
</comment>
<comment type="subcellular location">
    <subcellularLocation>
        <location evidence="1">Cytoplasm</location>
    </subcellularLocation>
</comment>
<comment type="similarity">
    <text evidence="1">Belongs to the class-I aminoacyl-tRNA synthetase family. MetG type 1 subfamily.</text>
</comment>
<protein>
    <recommendedName>
        <fullName evidence="1">Methionine--tRNA ligase</fullName>
        <ecNumber evidence="1">6.1.1.10</ecNumber>
    </recommendedName>
    <alternativeName>
        <fullName evidence="1">Methionyl-tRNA synthetase</fullName>
        <shortName evidence="1">MetRS</shortName>
    </alternativeName>
</protein>
<reference key="1">
    <citation type="submission" date="2007-08" db="EMBL/GenBank/DDBJ databases">
        <title>Complete sequence of Roseiflexus castenholzii DSM 13941.</title>
        <authorList>
            <consortium name="US DOE Joint Genome Institute"/>
            <person name="Copeland A."/>
            <person name="Lucas S."/>
            <person name="Lapidus A."/>
            <person name="Barry K."/>
            <person name="Glavina del Rio T."/>
            <person name="Dalin E."/>
            <person name="Tice H."/>
            <person name="Pitluck S."/>
            <person name="Thompson L.S."/>
            <person name="Brettin T."/>
            <person name="Bruce D."/>
            <person name="Detter J.C."/>
            <person name="Han C."/>
            <person name="Tapia R."/>
            <person name="Schmutz J."/>
            <person name="Larimer F."/>
            <person name="Land M."/>
            <person name="Hauser L."/>
            <person name="Kyrpides N."/>
            <person name="Mikhailova N."/>
            <person name="Bryant D.A."/>
            <person name="Hanada S."/>
            <person name="Tsukatani Y."/>
            <person name="Richardson P."/>
        </authorList>
    </citation>
    <scope>NUCLEOTIDE SEQUENCE [LARGE SCALE GENOMIC DNA]</scope>
    <source>
        <strain>DSM 13941 / HLO8</strain>
    </source>
</reference>
<name>SYM_ROSCS</name>
<feature type="chain" id="PRO_0000331889" description="Methionine--tRNA ligase">
    <location>
        <begin position="1"/>
        <end position="592"/>
    </location>
</feature>
<feature type="short sequence motif" description="'HIGH' region">
    <location>
        <begin position="12"/>
        <end position="22"/>
    </location>
</feature>
<feature type="short sequence motif" description="'KMSKS' region">
    <location>
        <begin position="342"/>
        <end position="346"/>
    </location>
</feature>
<feature type="binding site" evidence="1">
    <location>
        <position position="144"/>
    </location>
    <ligand>
        <name>Zn(2+)</name>
        <dbReference type="ChEBI" id="CHEBI:29105"/>
    </ligand>
</feature>
<feature type="binding site" evidence="1">
    <location>
        <position position="147"/>
    </location>
    <ligand>
        <name>Zn(2+)</name>
        <dbReference type="ChEBI" id="CHEBI:29105"/>
    </ligand>
</feature>
<feature type="binding site" evidence="1">
    <location>
        <position position="157"/>
    </location>
    <ligand>
        <name>Zn(2+)</name>
        <dbReference type="ChEBI" id="CHEBI:29105"/>
    </ligand>
</feature>
<feature type="binding site" evidence="1">
    <location>
        <position position="160"/>
    </location>
    <ligand>
        <name>Zn(2+)</name>
        <dbReference type="ChEBI" id="CHEBI:29105"/>
    </ligand>
</feature>
<feature type="binding site" evidence="1">
    <location>
        <position position="345"/>
    </location>
    <ligand>
        <name>ATP</name>
        <dbReference type="ChEBI" id="CHEBI:30616"/>
    </ligand>
</feature>